<protein>
    <recommendedName>
        <fullName evidence="1">GTPase Der</fullName>
    </recommendedName>
    <alternativeName>
        <fullName evidence="1">GTP-binding protein EngA</fullName>
    </alternativeName>
</protein>
<name>DER_BRUSI</name>
<sequence>MGFTLAIVGRPNVGKSTLFNRLVGRKLALVDDLPGVTRDRRIHDAKLYDLKFQLIDTAGLEEAANDSLEARMRAQTEAAISEADAVLFVIDAKAGITPADSTFAEAVRRSGKPVVLVANKAEARGSEAGMYDAFQLGLGEPCPISAEHGQGMPDLRDAIVELLGEERVFAEERQEEAADEVFTPAAVGALVGDDIEDPDAEEIPAYDATKPLRIAIVGRPNAGKSTLINTMLGEDRLLTGPEAGITRDSISADWEWHGRKIKLFDTAGMRRKARVQEKLEKLSVADGLRAIRFAEVVIIVLDATIPFEKQDLQIADLIIREGRAPVIAFNKWDLIEDRQMVLADLYEKTARLLPQVRGLRAVPISGERGQGIDKLMENVVKTHEIWNRRISTGRLNRWLEGVIAHQPPPAVSGRRLKVKYMTQVKTRPPGFVVSCSRPDAMPQSYVRYLINGLRETFDMPGVPIRLSLRTSDNPFAGRAKKKK</sequence>
<dbReference type="EMBL" id="CP000911">
    <property type="protein sequence ID" value="ABY37496.1"/>
    <property type="molecule type" value="Genomic_DNA"/>
</dbReference>
<dbReference type="RefSeq" id="WP_006072196.1">
    <property type="nucleotide sequence ID" value="NC_010169.1"/>
</dbReference>
<dbReference type="SMR" id="B0CK66"/>
<dbReference type="KEGG" id="bmt:BSUIS_A0406"/>
<dbReference type="HOGENOM" id="CLU_016077_5_0_5"/>
<dbReference type="Proteomes" id="UP000008545">
    <property type="component" value="Chromosome I"/>
</dbReference>
<dbReference type="GO" id="GO:0005525">
    <property type="term" value="F:GTP binding"/>
    <property type="evidence" value="ECO:0007669"/>
    <property type="project" value="UniProtKB-UniRule"/>
</dbReference>
<dbReference type="GO" id="GO:0042254">
    <property type="term" value="P:ribosome biogenesis"/>
    <property type="evidence" value="ECO:0007669"/>
    <property type="project" value="UniProtKB-KW"/>
</dbReference>
<dbReference type="CDD" id="cd01894">
    <property type="entry name" value="EngA1"/>
    <property type="match status" value="1"/>
</dbReference>
<dbReference type="CDD" id="cd01895">
    <property type="entry name" value="EngA2"/>
    <property type="match status" value="1"/>
</dbReference>
<dbReference type="FunFam" id="3.30.300.20:FF:000004">
    <property type="entry name" value="GTPase Der"/>
    <property type="match status" value="1"/>
</dbReference>
<dbReference type="FunFam" id="3.40.50.300:FF:000057">
    <property type="entry name" value="GTPase Der"/>
    <property type="match status" value="1"/>
</dbReference>
<dbReference type="Gene3D" id="3.30.300.20">
    <property type="match status" value="1"/>
</dbReference>
<dbReference type="Gene3D" id="3.40.50.300">
    <property type="entry name" value="P-loop containing nucleotide triphosphate hydrolases"/>
    <property type="match status" value="2"/>
</dbReference>
<dbReference type="HAMAP" id="MF_00195">
    <property type="entry name" value="GTPase_Der"/>
    <property type="match status" value="1"/>
</dbReference>
<dbReference type="InterPro" id="IPR031166">
    <property type="entry name" value="G_ENGA"/>
</dbReference>
<dbReference type="InterPro" id="IPR006073">
    <property type="entry name" value="GTP-bd"/>
</dbReference>
<dbReference type="InterPro" id="IPR016484">
    <property type="entry name" value="GTPase_Der"/>
</dbReference>
<dbReference type="InterPro" id="IPR032859">
    <property type="entry name" value="KH_dom-like"/>
</dbReference>
<dbReference type="InterPro" id="IPR015946">
    <property type="entry name" value="KH_dom-like_a/b"/>
</dbReference>
<dbReference type="InterPro" id="IPR027417">
    <property type="entry name" value="P-loop_NTPase"/>
</dbReference>
<dbReference type="InterPro" id="IPR005225">
    <property type="entry name" value="Small_GTP-bd"/>
</dbReference>
<dbReference type="NCBIfam" id="TIGR03594">
    <property type="entry name" value="GTPase_EngA"/>
    <property type="match status" value="1"/>
</dbReference>
<dbReference type="NCBIfam" id="TIGR00231">
    <property type="entry name" value="small_GTP"/>
    <property type="match status" value="2"/>
</dbReference>
<dbReference type="PANTHER" id="PTHR43834">
    <property type="entry name" value="GTPASE DER"/>
    <property type="match status" value="1"/>
</dbReference>
<dbReference type="PANTHER" id="PTHR43834:SF6">
    <property type="entry name" value="GTPASE DER"/>
    <property type="match status" value="1"/>
</dbReference>
<dbReference type="Pfam" id="PF14714">
    <property type="entry name" value="KH_dom-like"/>
    <property type="match status" value="1"/>
</dbReference>
<dbReference type="Pfam" id="PF01926">
    <property type="entry name" value="MMR_HSR1"/>
    <property type="match status" value="2"/>
</dbReference>
<dbReference type="PIRSF" id="PIRSF006485">
    <property type="entry name" value="GTP-binding_EngA"/>
    <property type="match status" value="1"/>
</dbReference>
<dbReference type="PRINTS" id="PR00326">
    <property type="entry name" value="GTP1OBG"/>
</dbReference>
<dbReference type="SUPFAM" id="SSF52540">
    <property type="entry name" value="P-loop containing nucleoside triphosphate hydrolases"/>
    <property type="match status" value="2"/>
</dbReference>
<dbReference type="PROSITE" id="PS51712">
    <property type="entry name" value="G_ENGA"/>
    <property type="match status" value="2"/>
</dbReference>
<organism>
    <name type="scientific">Brucella suis (strain ATCC 23445 / NCTC 10510)</name>
    <dbReference type="NCBI Taxonomy" id="470137"/>
    <lineage>
        <taxon>Bacteria</taxon>
        <taxon>Pseudomonadati</taxon>
        <taxon>Pseudomonadota</taxon>
        <taxon>Alphaproteobacteria</taxon>
        <taxon>Hyphomicrobiales</taxon>
        <taxon>Brucellaceae</taxon>
        <taxon>Brucella/Ochrobactrum group</taxon>
        <taxon>Brucella</taxon>
    </lineage>
</organism>
<gene>
    <name evidence="1" type="primary">der</name>
    <name type="synonym">engA</name>
    <name type="ordered locus">BSUIS_A0406</name>
</gene>
<accession>B0CK66</accession>
<proteinExistence type="inferred from homology"/>
<comment type="function">
    <text evidence="1">GTPase that plays an essential role in the late steps of ribosome biogenesis.</text>
</comment>
<comment type="subunit">
    <text evidence="1">Associates with the 50S ribosomal subunit.</text>
</comment>
<comment type="similarity">
    <text evidence="1">Belongs to the TRAFAC class TrmE-Era-EngA-EngB-Septin-like GTPase superfamily. EngA (Der) GTPase family.</text>
</comment>
<evidence type="ECO:0000255" key="1">
    <source>
        <dbReference type="HAMAP-Rule" id="MF_00195"/>
    </source>
</evidence>
<keyword id="KW-0342">GTP-binding</keyword>
<keyword id="KW-0547">Nucleotide-binding</keyword>
<keyword id="KW-0677">Repeat</keyword>
<keyword id="KW-0690">Ribosome biogenesis</keyword>
<feature type="chain" id="PRO_1000077650" description="GTPase Der">
    <location>
        <begin position="1"/>
        <end position="483"/>
    </location>
</feature>
<feature type="domain" description="EngA-type G 1">
    <location>
        <begin position="3"/>
        <end position="167"/>
    </location>
</feature>
<feature type="domain" description="EngA-type G 2">
    <location>
        <begin position="212"/>
        <end position="387"/>
    </location>
</feature>
<feature type="domain" description="KH-like" evidence="1">
    <location>
        <begin position="388"/>
        <end position="472"/>
    </location>
</feature>
<feature type="binding site" evidence="1">
    <location>
        <begin position="9"/>
        <end position="16"/>
    </location>
    <ligand>
        <name>GTP</name>
        <dbReference type="ChEBI" id="CHEBI:37565"/>
        <label>1</label>
    </ligand>
</feature>
<feature type="binding site" evidence="1">
    <location>
        <begin position="56"/>
        <end position="60"/>
    </location>
    <ligand>
        <name>GTP</name>
        <dbReference type="ChEBI" id="CHEBI:37565"/>
        <label>1</label>
    </ligand>
</feature>
<feature type="binding site" evidence="1">
    <location>
        <begin position="119"/>
        <end position="122"/>
    </location>
    <ligand>
        <name>GTP</name>
        <dbReference type="ChEBI" id="CHEBI:37565"/>
        <label>1</label>
    </ligand>
</feature>
<feature type="binding site" evidence="1">
    <location>
        <begin position="218"/>
        <end position="225"/>
    </location>
    <ligand>
        <name>GTP</name>
        <dbReference type="ChEBI" id="CHEBI:37565"/>
        <label>2</label>
    </ligand>
</feature>
<feature type="binding site" evidence="1">
    <location>
        <begin position="265"/>
        <end position="269"/>
    </location>
    <ligand>
        <name>GTP</name>
        <dbReference type="ChEBI" id="CHEBI:37565"/>
        <label>2</label>
    </ligand>
</feature>
<feature type="binding site" evidence="1">
    <location>
        <begin position="330"/>
        <end position="333"/>
    </location>
    <ligand>
        <name>GTP</name>
        <dbReference type="ChEBI" id="CHEBI:37565"/>
        <label>2</label>
    </ligand>
</feature>
<reference key="1">
    <citation type="submission" date="2007-12" db="EMBL/GenBank/DDBJ databases">
        <title>Brucella suis ATCC 23445 whole genome shotgun sequencing project.</title>
        <authorList>
            <person name="Setubal J.C."/>
            <person name="Bowns C."/>
            <person name="Boyle S."/>
            <person name="Crasta O.R."/>
            <person name="Czar M.J."/>
            <person name="Dharmanolla C."/>
            <person name="Gillespie J.J."/>
            <person name="Kenyon R.W."/>
            <person name="Lu J."/>
            <person name="Mane S."/>
            <person name="Mohapatra S."/>
            <person name="Nagrani S."/>
            <person name="Purkayastha A."/>
            <person name="Rajasimha H.K."/>
            <person name="Shallom J.M."/>
            <person name="Shallom S."/>
            <person name="Shukla M."/>
            <person name="Snyder E.E."/>
            <person name="Sobral B.W."/>
            <person name="Wattam A.R."/>
            <person name="Will R."/>
            <person name="Williams K."/>
            <person name="Yoo H."/>
            <person name="Bruce D."/>
            <person name="Detter C."/>
            <person name="Munk C."/>
            <person name="Brettin T.S."/>
        </authorList>
    </citation>
    <scope>NUCLEOTIDE SEQUENCE [LARGE SCALE GENOMIC DNA]</scope>
    <source>
        <strain>ATCC 23445 / NCTC 10510</strain>
    </source>
</reference>